<feature type="chain" id="PRO_0000094727" description="Uncharacterized transporter YrhG">
    <location>
        <begin position="1"/>
        <end position="266"/>
    </location>
</feature>
<feature type="transmembrane region" description="Helical" evidence="1">
    <location>
        <begin position="25"/>
        <end position="45"/>
    </location>
</feature>
<feature type="transmembrane region" description="Helical" evidence="1">
    <location>
        <begin position="64"/>
        <end position="84"/>
    </location>
</feature>
<feature type="transmembrane region" description="Helical" evidence="1">
    <location>
        <begin position="111"/>
        <end position="131"/>
    </location>
</feature>
<feature type="transmembrane region" description="Helical" evidence="1">
    <location>
        <begin position="158"/>
        <end position="178"/>
    </location>
</feature>
<feature type="transmembrane region" description="Helical" evidence="1">
    <location>
        <begin position="186"/>
        <end position="206"/>
    </location>
</feature>
<feature type="transmembrane region" description="Helical" evidence="1">
    <location>
        <begin position="209"/>
        <end position="229"/>
    </location>
</feature>
<feature type="transmembrane region" description="Helical" evidence="1">
    <location>
        <begin position="230"/>
        <end position="250"/>
    </location>
</feature>
<gene>
    <name type="primary">yrhG</name>
    <name type="ordered locus">BSU27200</name>
</gene>
<proteinExistence type="inferred from homology"/>
<organism>
    <name type="scientific">Bacillus subtilis (strain 168)</name>
    <dbReference type="NCBI Taxonomy" id="224308"/>
    <lineage>
        <taxon>Bacteria</taxon>
        <taxon>Bacillati</taxon>
        <taxon>Bacillota</taxon>
        <taxon>Bacilli</taxon>
        <taxon>Bacillales</taxon>
        <taxon>Bacillaceae</taxon>
        <taxon>Bacillus</taxon>
    </lineage>
</organism>
<dbReference type="EMBL" id="U93874">
    <property type="protein sequence ID" value="AAB80864.1"/>
    <property type="molecule type" value="Genomic_DNA"/>
</dbReference>
<dbReference type="EMBL" id="AL009126">
    <property type="protein sequence ID" value="CAB14662.1"/>
    <property type="molecule type" value="Genomic_DNA"/>
</dbReference>
<dbReference type="PIR" id="F69974">
    <property type="entry name" value="F69974"/>
</dbReference>
<dbReference type="RefSeq" id="NP_390598.1">
    <property type="nucleotide sequence ID" value="NC_000964.3"/>
</dbReference>
<dbReference type="RefSeq" id="WP_003229815.1">
    <property type="nucleotide sequence ID" value="NZ_OZ025638.1"/>
</dbReference>
<dbReference type="SMR" id="O05399"/>
<dbReference type="FunCoup" id="O05399">
    <property type="interactions" value="123"/>
</dbReference>
<dbReference type="STRING" id="224308.BSU27200"/>
<dbReference type="PaxDb" id="224308-BSU27200"/>
<dbReference type="EnsemblBacteria" id="CAB14662">
    <property type="protein sequence ID" value="CAB14662"/>
    <property type="gene ID" value="BSU_27200"/>
</dbReference>
<dbReference type="GeneID" id="937992"/>
<dbReference type="KEGG" id="bsu:BSU27200"/>
<dbReference type="PATRIC" id="fig|224308.179.peg.2956"/>
<dbReference type="eggNOG" id="COG2116">
    <property type="taxonomic scope" value="Bacteria"/>
</dbReference>
<dbReference type="InParanoid" id="O05399"/>
<dbReference type="OrthoDB" id="9786493at2"/>
<dbReference type="PhylomeDB" id="O05399"/>
<dbReference type="BioCyc" id="BSUB:BSU27200-MONOMER"/>
<dbReference type="Proteomes" id="UP000001570">
    <property type="component" value="Chromosome"/>
</dbReference>
<dbReference type="GO" id="GO:0005886">
    <property type="term" value="C:plasma membrane"/>
    <property type="evidence" value="ECO:0000318"/>
    <property type="project" value="GO_Central"/>
</dbReference>
<dbReference type="GO" id="GO:0015499">
    <property type="term" value="F:formate transmembrane transporter activity"/>
    <property type="evidence" value="ECO:0000318"/>
    <property type="project" value="GO_Central"/>
</dbReference>
<dbReference type="GO" id="GO:0015724">
    <property type="term" value="P:formate transport"/>
    <property type="evidence" value="ECO:0000318"/>
    <property type="project" value="GO_Central"/>
</dbReference>
<dbReference type="FunFam" id="1.20.1080.10:FF:000011">
    <property type="entry name" value="Formate family transporter"/>
    <property type="match status" value="1"/>
</dbReference>
<dbReference type="Gene3D" id="1.20.1080.10">
    <property type="entry name" value="Glycerol uptake facilitator protein"/>
    <property type="match status" value="1"/>
</dbReference>
<dbReference type="InterPro" id="IPR023271">
    <property type="entry name" value="Aquaporin-like"/>
</dbReference>
<dbReference type="InterPro" id="IPR000292">
    <property type="entry name" value="For/NO2_transpt"/>
</dbReference>
<dbReference type="InterPro" id="IPR024002">
    <property type="entry name" value="For/NO2_transpt_CS"/>
</dbReference>
<dbReference type="NCBIfam" id="TIGR00790">
    <property type="entry name" value="fnt"/>
    <property type="match status" value="1"/>
</dbReference>
<dbReference type="PANTHER" id="PTHR30520">
    <property type="entry name" value="FORMATE TRANSPORTER-RELATED"/>
    <property type="match status" value="1"/>
</dbReference>
<dbReference type="PANTHER" id="PTHR30520:SF6">
    <property type="entry name" value="FORMATE_NITRATE FAMILY TRANSPORTER (EUROFUNG)"/>
    <property type="match status" value="1"/>
</dbReference>
<dbReference type="Pfam" id="PF01226">
    <property type="entry name" value="Form_Nir_trans"/>
    <property type="match status" value="1"/>
</dbReference>
<dbReference type="PROSITE" id="PS01005">
    <property type="entry name" value="FORMATE_NITRITE_TP_1"/>
    <property type="match status" value="1"/>
</dbReference>
<dbReference type="PROSITE" id="PS01006">
    <property type="entry name" value="FORMATE_NITRITE_TP_2"/>
    <property type="match status" value="1"/>
</dbReference>
<reference key="1">
    <citation type="journal article" date="1997" name="Microbiology">
        <title>Sequence of the Bacillus subtilis genome region in the vicinity of the lev operon reveals two new extracytoplasmic function RNA polymerase sigma factors SigV and SigZ.</title>
        <authorList>
            <person name="Sorokin A."/>
            <person name="Bolotin A."/>
            <person name="Purnelle B."/>
            <person name="Hilbert H."/>
            <person name="Lauber J."/>
            <person name="Duesterhoeft A."/>
            <person name="Ehrlich S.D."/>
        </authorList>
    </citation>
    <scope>NUCLEOTIDE SEQUENCE [GENOMIC DNA]</scope>
    <source>
        <strain>168</strain>
    </source>
</reference>
<reference key="2">
    <citation type="journal article" date="1997" name="Nature">
        <title>The complete genome sequence of the Gram-positive bacterium Bacillus subtilis.</title>
        <authorList>
            <person name="Kunst F."/>
            <person name="Ogasawara N."/>
            <person name="Moszer I."/>
            <person name="Albertini A.M."/>
            <person name="Alloni G."/>
            <person name="Azevedo V."/>
            <person name="Bertero M.G."/>
            <person name="Bessieres P."/>
            <person name="Bolotin A."/>
            <person name="Borchert S."/>
            <person name="Borriss R."/>
            <person name="Boursier L."/>
            <person name="Brans A."/>
            <person name="Braun M."/>
            <person name="Brignell S.C."/>
            <person name="Bron S."/>
            <person name="Brouillet S."/>
            <person name="Bruschi C.V."/>
            <person name="Caldwell B."/>
            <person name="Capuano V."/>
            <person name="Carter N.M."/>
            <person name="Choi S.-K."/>
            <person name="Codani J.-J."/>
            <person name="Connerton I.F."/>
            <person name="Cummings N.J."/>
            <person name="Daniel R.A."/>
            <person name="Denizot F."/>
            <person name="Devine K.M."/>
            <person name="Duesterhoeft A."/>
            <person name="Ehrlich S.D."/>
            <person name="Emmerson P.T."/>
            <person name="Entian K.-D."/>
            <person name="Errington J."/>
            <person name="Fabret C."/>
            <person name="Ferrari E."/>
            <person name="Foulger D."/>
            <person name="Fritz C."/>
            <person name="Fujita M."/>
            <person name="Fujita Y."/>
            <person name="Fuma S."/>
            <person name="Galizzi A."/>
            <person name="Galleron N."/>
            <person name="Ghim S.-Y."/>
            <person name="Glaser P."/>
            <person name="Goffeau A."/>
            <person name="Golightly E.J."/>
            <person name="Grandi G."/>
            <person name="Guiseppi G."/>
            <person name="Guy B.J."/>
            <person name="Haga K."/>
            <person name="Haiech J."/>
            <person name="Harwood C.R."/>
            <person name="Henaut A."/>
            <person name="Hilbert H."/>
            <person name="Holsappel S."/>
            <person name="Hosono S."/>
            <person name="Hullo M.-F."/>
            <person name="Itaya M."/>
            <person name="Jones L.-M."/>
            <person name="Joris B."/>
            <person name="Karamata D."/>
            <person name="Kasahara Y."/>
            <person name="Klaerr-Blanchard M."/>
            <person name="Klein C."/>
            <person name="Kobayashi Y."/>
            <person name="Koetter P."/>
            <person name="Koningstein G."/>
            <person name="Krogh S."/>
            <person name="Kumano M."/>
            <person name="Kurita K."/>
            <person name="Lapidus A."/>
            <person name="Lardinois S."/>
            <person name="Lauber J."/>
            <person name="Lazarevic V."/>
            <person name="Lee S.-M."/>
            <person name="Levine A."/>
            <person name="Liu H."/>
            <person name="Masuda S."/>
            <person name="Mauel C."/>
            <person name="Medigue C."/>
            <person name="Medina N."/>
            <person name="Mellado R.P."/>
            <person name="Mizuno M."/>
            <person name="Moestl D."/>
            <person name="Nakai S."/>
            <person name="Noback M."/>
            <person name="Noone D."/>
            <person name="O'Reilly M."/>
            <person name="Ogawa K."/>
            <person name="Ogiwara A."/>
            <person name="Oudega B."/>
            <person name="Park S.-H."/>
            <person name="Parro V."/>
            <person name="Pohl T.M."/>
            <person name="Portetelle D."/>
            <person name="Porwollik S."/>
            <person name="Prescott A.M."/>
            <person name="Presecan E."/>
            <person name="Pujic P."/>
            <person name="Purnelle B."/>
            <person name="Rapoport G."/>
            <person name="Rey M."/>
            <person name="Reynolds S."/>
            <person name="Rieger M."/>
            <person name="Rivolta C."/>
            <person name="Rocha E."/>
            <person name="Roche B."/>
            <person name="Rose M."/>
            <person name="Sadaie Y."/>
            <person name="Sato T."/>
            <person name="Scanlan E."/>
            <person name="Schleich S."/>
            <person name="Schroeter R."/>
            <person name="Scoffone F."/>
            <person name="Sekiguchi J."/>
            <person name="Sekowska A."/>
            <person name="Seror S.J."/>
            <person name="Serror P."/>
            <person name="Shin B.-S."/>
            <person name="Soldo B."/>
            <person name="Sorokin A."/>
            <person name="Tacconi E."/>
            <person name="Takagi T."/>
            <person name="Takahashi H."/>
            <person name="Takemaru K."/>
            <person name="Takeuchi M."/>
            <person name="Tamakoshi A."/>
            <person name="Tanaka T."/>
            <person name="Terpstra P."/>
            <person name="Tognoni A."/>
            <person name="Tosato V."/>
            <person name="Uchiyama S."/>
            <person name="Vandenbol M."/>
            <person name="Vannier F."/>
            <person name="Vassarotti A."/>
            <person name="Viari A."/>
            <person name="Wambutt R."/>
            <person name="Wedler E."/>
            <person name="Wedler H."/>
            <person name="Weitzenegger T."/>
            <person name="Winters P."/>
            <person name="Wipat A."/>
            <person name="Yamamoto H."/>
            <person name="Yamane K."/>
            <person name="Yasumoto K."/>
            <person name="Yata K."/>
            <person name="Yoshida K."/>
            <person name="Yoshikawa H.-F."/>
            <person name="Zumstein E."/>
            <person name="Yoshikawa H."/>
            <person name="Danchin A."/>
        </authorList>
    </citation>
    <scope>NUCLEOTIDE SEQUENCE [LARGE SCALE GENOMIC DNA]</scope>
    <source>
        <strain>168</strain>
    </source>
</reference>
<evidence type="ECO:0000255" key="1"/>
<evidence type="ECO:0000305" key="2"/>
<accession>O05399</accession>
<keyword id="KW-1003">Cell membrane</keyword>
<keyword id="KW-0472">Membrane</keyword>
<keyword id="KW-1185">Reference proteome</keyword>
<keyword id="KW-0812">Transmembrane</keyword>
<keyword id="KW-1133">Transmembrane helix</keyword>
<keyword id="KW-0813">Transport</keyword>
<comment type="subcellular location">
    <subcellularLocation>
        <location evidence="2">Cell membrane</location>
        <topology evidence="2">Multi-pass membrane protein</topology>
    </subcellularLocation>
</comment>
<comment type="similarity">
    <text evidence="2">Belongs to the FNT transporter (TC 1.A.16) family.</text>
</comment>
<protein>
    <recommendedName>
        <fullName>Uncharacterized transporter YrhG</fullName>
    </recommendedName>
</protein>
<name>YRHG_BACSU</name>
<sequence length="266" mass="28488">MAFRKPDEIAEAAIEAGMKKIKLPLPSLLVLGFLGGAFIALGYLLDIRVIGDLPKEWGSLSSLIGAAVFPVGLILVVLAGAELITGNMMSVAMALFSRKISVKELAINWGIVTIMNLIGALFVAYFFGHLVGLTETGPYLEKTIAVAQGKLDMSFGKVLISAIGCNWLVCLAVWLSFGAQDAAGKILGIWFPIMAFVAIGFQHVVANMFVIPAAIFAGSFTWGQFIGNIIPAFIGNVIGGAVFVGLIYFIAYHKKDRSRKEMKQVS</sequence>